<feature type="chain" id="PRO_0000070329" description="UPF0227 protein YPO1616/y1776/YP_2238">
    <location>
        <begin position="1"/>
        <end position="180"/>
    </location>
</feature>
<organism>
    <name type="scientific">Yersinia pestis</name>
    <dbReference type="NCBI Taxonomy" id="632"/>
    <lineage>
        <taxon>Bacteria</taxon>
        <taxon>Pseudomonadati</taxon>
        <taxon>Pseudomonadota</taxon>
        <taxon>Gammaproteobacteria</taxon>
        <taxon>Enterobacterales</taxon>
        <taxon>Yersiniaceae</taxon>
        <taxon>Yersinia</taxon>
    </lineage>
</organism>
<name>Y1616_YERPE</name>
<accession>Q8ZFS2</accession>
<accession>Q0WGG1</accession>
<proteinExistence type="inferred from homology"/>
<sequence>MIVYLHGFDSNSPGNHEKVLQLQFIDPDVRFISYSTLHPRHDMQYLLKEVDKAIQQGGDEKSLICGVGLGGFWAERIGFLCGIRQVAFNPNLYPQENMSGKIDRPEEYIDIASKCIDGFREKNRDRCLVVLSRHDEMLDSQRTAGDLHPYYEIVWDDKQNHKFKDLSPHLQRIKAFKTLG</sequence>
<gene>
    <name type="ordered locus">YPO1616</name>
    <name type="ordered locus">y1776</name>
    <name type="ordered locus">YP_2238</name>
</gene>
<reference key="1">
    <citation type="journal article" date="2001" name="Nature">
        <title>Genome sequence of Yersinia pestis, the causative agent of plague.</title>
        <authorList>
            <person name="Parkhill J."/>
            <person name="Wren B.W."/>
            <person name="Thomson N.R."/>
            <person name="Titball R.W."/>
            <person name="Holden M.T.G."/>
            <person name="Prentice M.B."/>
            <person name="Sebaihia M."/>
            <person name="James K.D."/>
            <person name="Churcher C.M."/>
            <person name="Mungall K.L."/>
            <person name="Baker S."/>
            <person name="Basham D."/>
            <person name="Bentley S.D."/>
            <person name="Brooks K."/>
            <person name="Cerdeno-Tarraga A.-M."/>
            <person name="Chillingworth T."/>
            <person name="Cronin A."/>
            <person name="Davies R.M."/>
            <person name="Davis P."/>
            <person name="Dougan G."/>
            <person name="Feltwell T."/>
            <person name="Hamlin N."/>
            <person name="Holroyd S."/>
            <person name="Jagels K."/>
            <person name="Karlyshev A.V."/>
            <person name="Leather S."/>
            <person name="Moule S."/>
            <person name="Oyston P.C.F."/>
            <person name="Quail M.A."/>
            <person name="Rutherford K.M."/>
            <person name="Simmonds M."/>
            <person name="Skelton J."/>
            <person name="Stevens K."/>
            <person name="Whitehead S."/>
            <person name="Barrell B.G."/>
        </authorList>
    </citation>
    <scope>NUCLEOTIDE SEQUENCE [LARGE SCALE GENOMIC DNA]</scope>
    <source>
        <strain>CO-92 / Biovar Orientalis</strain>
    </source>
</reference>
<reference key="2">
    <citation type="journal article" date="2002" name="J. Bacteriol.">
        <title>Genome sequence of Yersinia pestis KIM.</title>
        <authorList>
            <person name="Deng W."/>
            <person name="Burland V."/>
            <person name="Plunkett G. III"/>
            <person name="Boutin A."/>
            <person name="Mayhew G.F."/>
            <person name="Liss P."/>
            <person name="Perna N.T."/>
            <person name="Rose D.J."/>
            <person name="Mau B."/>
            <person name="Zhou S."/>
            <person name="Schwartz D.C."/>
            <person name="Fetherston J.D."/>
            <person name="Lindler L.E."/>
            <person name="Brubaker R.R."/>
            <person name="Plano G.V."/>
            <person name="Straley S.C."/>
            <person name="McDonough K.A."/>
            <person name="Nilles M.L."/>
            <person name="Matson J.S."/>
            <person name="Blattner F.R."/>
            <person name="Perry R.D."/>
        </authorList>
    </citation>
    <scope>NUCLEOTIDE SEQUENCE [LARGE SCALE GENOMIC DNA]</scope>
    <source>
        <strain>KIM10+ / Biovar Mediaevalis</strain>
    </source>
</reference>
<reference key="3">
    <citation type="journal article" date="2004" name="DNA Res.">
        <title>Complete genome sequence of Yersinia pestis strain 91001, an isolate avirulent to humans.</title>
        <authorList>
            <person name="Song Y."/>
            <person name="Tong Z."/>
            <person name="Wang J."/>
            <person name="Wang L."/>
            <person name="Guo Z."/>
            <person name="Han Y."/>
            <person name="Zhang J."/>
            <person name="Pei D."/>
            <person name="Zhou D."/>
            <person name="Qin H."/>
            <person name="Pang X."/>
            <person name="Han Y."/>
            <person name="Zhai J."/>
            <person name="Li M."/>
            <person name="Cui B."/>
            <person name="Qi Z."/>
            <person name="Jin L."/>
            <person name="Dai R."/>
            <person name="Chen F."/>
            <person name="Li S."/>
            <person name="Ye C."/>
            <person name="Du Z."/>
            <person name="Lin W."/>
            <person name="Wang J."/>
            <person name="Yu J."/>
            <person name="Yang H."/>
            <person name="Wang J."/>
            <person name="Huang P."/>
            <person name="Yang R."/>
        </authorList>
    </citation>
    <scope>NUCLEOTIDE SEQUENCE [LARGE SCALE GENOMIC DNA]</scope>
    <source>
        <strain>91001 / Biovar Mediaevalis</strain>
    </source>
</reference>
<keyword id="KW-1185">Reference proteome</keyword>
<dbReference type="EMBL" id="AL590842">
    <property type="protein sequence ID" value="CAL20261.1"/>
    <property type="molecule type" value="Genomic_DNA"/>
</dbReference>
<dbReference type="EMBL" id="AE009952">
    <property type="protein sequence ID" value="AAM85344.1"/>
    <property type="molecule type" value="Genomic_DNA"/>
</dbReference>
<dbReference type="EMBL" id="AE017042">
    <property type="protein sequence ID" value="AAS62444.1"/>
    <property type="molecule type" value="Genomic_DNA"/>
</dbReference>
<dbReference type="PIR" id="AC0197">
    <property type="entry name" value="AC0197"/>
</dbReference>
<dbReference type="RefSeq" id="YP_002346627.1">
    <property type="nucleotide sequence ID" value="NC_003143.1"/>
</dbReference>
<dbReference type="SMR" id="Q8ZFS2"/>
<dbReference type="STRING" id="214092.YPO1616"/>
<dbReference type="ESTHER" id="yerpe-y1616">
    <property type="family name" value="abh_upf00227"/>
</dbReference>
<dbReference type="PaxDb" id="214092-YPO1616"/>
<dbReference type="DNASU" id="1146723"/>
<dbReference type="EnsemblBacteria" id="AAS62444">
    <property type="protein sequence ID" value="AAS62444"/>
    <property type="gene ID" value="YP_2238"/>
</dbReference>
<dbReference type="KEGG" id="ype:YPO1616"/>
<dbReference type="KEGG" id="ypk:y1776"/>
<dbReference type="KEGG" id="ypm:YP_2238"/>
<dbReference type="PATRIC" id="fig|214092.21.peg.1959"/>
<dbReference type="eggNOG" id="COG3150">
    <property type="taxonomic scope" value="Bacteria"/>
</dbReference>
<dbReference type="HOGENOM" id="CLU_128769_0_0_6"/>
<dbReference type="OMA" id="KCVSEFR"/>
<dbReference type="OrthoDB" id="6469735at2"/>
<dbReference type="Proteomes" id="UP000000815">
    <property type="component" value="Chromosome"/>
</dbReference>
<dbReference type="Proteomes" id="UP000001019">
    <property type="component" value="Chromosome"/>
</dbReference>
<dbReference type="Proteomes" id="UP000002490">
    <property type="component" value="Chromosome"/>
</dbReference>
<dbReference type="GO" id="GO:0005829">
    <property type="term" value="C:cytosol"/>
    <property type="evidence" value="ECO:0000318"/>
    <property type="project" value="GO_Central"/>
</dbReference>
<dbReference type="GO" id="GO:0016788">
    <property type="term" value="F:hydrolase activity, acting on ester bonds"/>
    <property type="evidence" value="ECO:0000318"/>
    <property type="project" value="GO_Central"/>
</dbReference>
<dbReference type="Gene3D" id="3.40.50.1820">
    <property type="entry name" value="alpha/beta hydrolase"/>
    <property type="match status" value="1"/>
</dbReference>
<dbReference type="HAMAP" id="MF_01047">
    <property type="entry name" value="UPF0227"/>
    <property type="match status" value="1"/>
</dbReference>
<dbReference type="InterPro" id="IPR029058">
    <property type="entry name" value="AB_hydrolase_fold"/>
</dbReference>
<dbReference type="InterPro" id="IPR022987">
    <property type="entry name" value="UPF0227"/>
</dbReference>
<dbReference type="InterPro" id="IPR008886">
    <property type="entry name" value="UPF0227/Esterase_YqiA"/>
</dbReference>
<dbReference type="NCBIfam" id="NF003431">
    <property type="entry name" value="PRK04940.1"/>
    <property type="match status" value="1"/>
</dbReference>
<dbReference type="PANTHER" id="PTHR35602">
    <property type="entry name" value="ESTERASE YQIA-RELATED"/>
    <property type="match status" value="1"/>
</dbReference>
<dbReference type="PANTHER" id="PTHR35602:SF2">
    <property type="entry name" value="UPF0227 PROTEIN YCFP"/>
    <property type="match status" value="1"/>
</dbReference>
<dbReference type="Pfam" id="PF05728">
    <property type="entry name" value="UPF0227"/>
    <property type="match status" value="1"/>
</dbReference>
<dbReference type="SUPFAM" id="SSF53474">
    <property type="entry name" value="alpha/beta-Hydrolases"/>
    <property type="match status" value="1"/>
</dbReference>
<protein>
    <recommendedName>
        <fullName evidence="1">UPF0227 protein YPO1616/y1776/YP_2238</fullName>
    </recommendedName>
</protein>
<evidence type="ECO:0000255" key="1">
    <source>
        <dbReference type="HAMAP-Rule" id="MF_01047"/>
    </source>
</evidence>
<comment type="similarity">
    <text evidence="1">Belongs to the UPF0227 family.</text>
</comment>